<keyword id="KW-0004">4Fe-4S</keyword>
<keyword id="KW-1003">Cell membrane</keyword>
<keyword id="KW-0216">Detoxification</keyword>
<keyword id="KW-0274">FAD</keyword>
<keyword id="KW-0285">Flavoprotein</keyword>
<keyword id="KW-0408">Iron</keyword>
<keyword id="KW-0411">Iron-sulfur</keyword>
<keyword id="KW-0472">Membrane</keyword>
<keyword id="KW-0479">Metal-binding</keyword>
<keyword id="KW-0560">Oxidoreductase</keyword>
<keyword id="KW-1185">Reference proteome</keyword>
<keyword id="KW-0732">Signal</keyword>
<reference key="1">
    <citation type="journal article" date="2009" name="Stand. Genomic Sci.">
        <title>Complete genome sequence of Eggerthella lenta type strain (IPP VPI 0255).</title>
        <authorList>
            <person name="Saunders E."/>
            <person name="Pukall R."/>
            <person name="Abt B."/>
            <person name="Lapidus A."/>
            <person name="Glavina Del Rio T."/>
            <person name="Copeland A."/>
            <person name="Tice H."/>
            <person name="Cheng J.F."/>
            <person name="Lucas S."/>
            <person name="Chen F."/>
            <person name="Nolan M."/>
            <person name="Bruce D."/>
            <person name="Goodwin L."/>
            <person name="Pitluck S."/>
            <person name="Ivanova N."/>
            <person name="Mavromatis K."/>
            <person name="Ovchinnikova G."/>
            <person name="Pati A."/>
            <person name="Chen A."/>
            <person name="Palaniappan K."/>
            <person name="Land M."/>
            <person name="Hauser L."/>
            <person name="Chang Y.J."/>
            <person name="Jeffries C.D."/>
            <person name="Chain P."/>
            <person name="Meincke L."/>
            <person name="Sims D."/>
            <person name="Brettin T."/>
            <person name="Detter J.C."/>
            <person name="Goker M."/>
            <person name="Bristow J."/>
            <person name="Eisen J.A."/>
            <person name="Markowitz V."/>
            <person name="Hugenholtz P."/>
            <person name="Kyrpides N.C."/>
            <person name="Klenk H.P."/>
            <person name="Han C."/>
        </authorList>
    </citation>
    <scope>NUCLEOTIDE SEQUENCE [LARGE SCALE GENOMIC DNA]</scope>
    <source>
        <strain>ATCC 25559 / DSM 2243 / CCUG 17323 / JCM 9979 / KCTC 3265 / NCTC 11813 / VPI 0255 / 1899 B</strain>
    </source>
</reference>
<reference key="2">
    <citation type="journal article" date="2013" name="Science">
        <title>Predicting and manipulating cardiac drug inactivation by the human gut bacterium Eggerthella lenta.</title>
        <authorList>
            <person name="Haiser H.J."/>
            <person name="Gootenberg D.B."/>
            <person name="Chatman K."/>
            <person name="Sirasani G."/>
            <person name="Balskus E.P."/>
            <person name="Turnbaugh P.J."/>
        </authorList>
    </citation>
    <scope>INDUCTION</scope>
    <source>
        <strain>ATCC 25559 / DSM 2243 / CCUG 17323 / JCM 9979 / KCTC 3265 / NCTC 11813 / VPI 0255 / 1899 B</strain>
    </source>
</reference>
<reference key="3">
    <citation type="journal article" date="2018" name="Elife">
        <title>Discovery and characterization of a prevalent human gut bacterial enzyme sufficient for the inactivation of a family of plant toxins.</title>
        <authorList>
            <person name="Koppel N."/>
            <person name="Bisanz J.E."/>
            <person name="Pandelia M.E."/>
            <person name="Turnbaugh P.J."/>
            <person name="Balskus E.P."/>
        </authorList>
    </citation>
    <scope>FUNCTION</scope>
    <scope>CATALYTIC ACTIVITY</scope>
    <scope>COFACTOR</scope>
    <scope>BIOPHYSICOCHEMICAL PROPERTIES</scope>
    <scope>SUBSTRATE SPECIFICITY</scope>
    <scope>MUTAGENESIS OF CYS-82; CYS-158; CYS-187; CYS-265; CYS-327; TYR-532; CYS-535 AND GLY-536</scope>
    <scope>REACTION MECHANISM</scope>
    <scope>SUBUNIT</scope>
    <scope>SUBCELLULAR LOCATION</scope>
    <source>
        <strain>ATCC 25559 / DSM 2243 / CCUG 17323 / JCM 9979 / KCTC 3265 / NCTC 11813 / VPI 0255 / 1899 B</strain>
    </source>
</reference>
<dbReference type="EC" id="1.3.2.-" evidence="3"/>
<dbReference type="EMBL" id="CP001726">
    <property type="protein sequence ID" value="ACV56484.1"/>
    <property type="molecule type" value="Genomic_DNA"/>
</dbReference>
<dbReference type="RefSeq" id="WP_015761237.1">
    <property type="nucleotide sequence ID" value="NC_013204.1"/>
</dbReference>
<dbReference type="SMR" id="C8WLM1"/>
<dbReference type="STRING" id="479437.Elen_2529"/>
<dbReference type="PaxDb" id="479437-Elen_2529"/>
<dbReference type="KEGG" id="ele:Elen_2529"/>
<dbReference type="eggNOG" id="COG1053">
    <property type="taxonomic scope" value="Bacteria"/>
</dbReference>
<dbReference type="HOGENOM" id="CLU_011398_4_3_11"/>
<dbReference type="OrthoDB" id="337830at2"/>
<dbReference type="BioCyc" id="ELEN479437:G1GFY-2552-MONOMER"/>
<dbReference type="SABIO-RK" id="C8WLM1"/>
<dbReference type="Proteomes" id="UP000001377">
    <property type="component" value="Chromosome"/>
</dbReference>
<dbReference type="GO" id="GO:0005886">
    <property type="term" value="C:plasma membrane"/>
    <property type="evidence" value="ECO:0007669"/>
    <property type="project" value="UniProtKB-SubCell"/>
</dbReference>
<dbReference type="GO" id="GO:0051539">
    <property type="term" value="F:4 iron, 4 sulfur cluster binding"/>
    <property type="evidence" value="ECO:0007669"/>
    <property type="project" value="UniProtKB-KW"/>
</dbReference>
<dbReference type="GO" id="GO:0046872">
    <property type="term" value="F:metal ion binding"/>
    <property type="evidence" value="ECO:0007669"/>
    <property type="project" value="UniProtKB-KW"/>
</dbReference>
<dbReference type="GO" id="GO:0033765">
    <property type="term" value="F:steroid dehydrogenase activity, acting on the CH-CH group of donors"/>
    <property type="evidence" value="ECO:0007669"/>
    <property type="project" value="UniProtKB-ARBA"/>
</dbReference>
<dbReference type="GO" id="GO:0009636">
    <property type="term" value="P:response to toxic substance"/>
    <property type="evidence" value="ECO:0007669"/>
    <property type="project" value="UniProtKB-KW"/>
</dbReference>
<dbReference type="GO" id="GO:0008202">
    <property type="term" value="P:steroid metabolic process"/>
    <property type="evidence" value="ECO:0007669"/>
    <property type="project" value="UniProtKB-ARBA"/>
</dbReference>
<dbReference type="Gene3D" id="3.50.50.60">
    <property type="entry name" value="FAD/NAD(P)-binding domain"/>
    <property type="match status" value="1"/>
</dbReference>
<dbReference type="Gene3D" id="3.90.700.10">
    <property type="entry name" value="Succinate dehydrogenase/fumarate reductase flavoprotein, catalytic domain"/>
    <property type="match status" value="1"/>
</dbReference>
<dbReference type="InterPro" id="IPR003953">
    <property type="entry name" value="FAD-dep_OxRdtase_2_FAD-bd"/>
</dbReference>
<dbReference type="InterPro" id="IPR050315">
    <property type="entry name" value="FAD-oxidoreductase_2"/>
</dbReference>
<dbReference type="InterPro" id="IPR036188">
    <property type="entry name" value="FAD/NAD-bd_sf"/>
</dbReference>
<dbReference type="InterPro" id="IPR027477">
    <property type="entry name" value="Succ_DH/fumarate_Rdtase_cat_sf"/>
</dbReference>
<dbReference type="InterPro" id="IPR006311">
    <property type="entry name" value="TAT_signal"/>
</dbReference>
<dbReference type="InterPro" id="IPR019546">
    <property type="entry name" value="TAT_signal_bac_arc"/>
</dbReference>
<dbReference type="NCBIfam" id="TIGR01409">
    <property type="entry name" value="TAT_signal_seq"/>
    <property type="match status" value="1"/>
</dbReference>
<dbReference type="PANTHER" id="PTHR43400:SF10">
    <property type="entry name" value="3-OXOSTEROID 1-DEHYDROGENASE"/>
    <property type="match status" value="1"/>
</dbReference>
<dbReference type="PANTHER" id="PTHR43400">
    <property type="entry name" value="FUMARATE REDUCTASE"/>
    <property type="match status" value="1"/>
</dbReference>
<dbReference type="Pfam" id="PF00890">
    <property type="entry name" value="FAD_binding_2"/>
    <property type="match status" value="1"/>
</dbReference>
<dbReference type="SUPFAM" id="SSF51905">
    <property type="entry name" value="FAD/NAD(P)-binding domain"/>
    <property type="match status" value="1"/>
</dbReference>
<dbReference type="SUPFAM" id="SSF56425">
    <property type="entry name" value="Succinate dehydrogenase/fumarate reductase flavoprotein, catalytic domain"/>
    <property type="match status" value="1"/>
</dbReference>
<dbReference type="PROSITE" id="PS51318">
    <property type="entry name" value="TAT"/>
    <property type="match status" value="1"/>
</dbReference>
<gene>
    <name evidence="4" type="primary">cgr2</name>
    <name evidence="7" type="ordered locus">Elen_2529</name>
</gene>
<organism>
    <name type="scientific">Eggerthella lenta (strain ATCC 25559 / DSM 2243 / CCUG 17323 / JCM 9979 / KCTC 3265 / NCTC 11813 / VPI 0255 / 1899 B)</name>
    <name type="common">Eubacterium lentum</name>
    <dbReference type="NCBI Taxonomy" id="479437"/>
    <lineage>
        <taxon>Bacteria</taxon>
        <taxon>Bacillati</taxon>
        <taxon>Actinomycetota</taxon>
        <taxon>Coriobacteriia</taxon>
        <taxon>Eggerthellales</taxon>
        <taxon>Eggerthellaceae</taxon>
        <taxon>Eggerthella</taxon>
    </lineage>
</organism>
<accession>C8WLM1</accession>
<protein>
    <recommendedName>
        <fullName evidence="6">Digoxin reductase</fullName>
        <ecNumber evidence="3">1.3.2.-</ecNumber>
    </recommendedName>
    <alternativeName>
        <fullName evidence="6">Cardenolide reductase</fullName>
    </alternativeName>
    <alternativeName>
        <fullName evidence="4">Cardiac glycoside reductase operon protein 2</fullName>
    </alternativeName>
</protein>
<comment type="function">
    <text evidence="3">Involved in the inactivation of the cardiac medication and plant natural product digoxin, thus decreasing drug efficacy and toxicity. Catalyzes the reduction of the alpha,beta-unsaturated butyrolactone ring of digoxin to the inactive metabolite dihydrodigoxin. Likely uses the cytochrome Cgr1 as the physiological electron donor, encoded by the adjacent gene in the locus. Only reduces digoxin and other cardenolide toxins, such as digitoxin, digoxigenin, ouabain and ouabagenin. Therefore is a specialized enzyme present in some gut bacteria E.lenta that protects their human host against ingested plant toxins.</text>
</comment>
<comment type="catalytic activity">
    <reaction evidence="3 5">
        <text>digoxin + 2 Fe(II)-[cytochrome c] + 3 H(+) = dihydrodigoxin + 2 Fe(III)-[cytochrome c]</text>
        <dbReference type="Rhea" id="RHEA:62528"/>
        <dbReference type="Rhea" id="RHEA-COMP:10350"/>
        <dbReference type="Rhea" id="RHEA-COMP:14399"/>
        <dbReference type="ChEBI" id="CHEBI:15378"/>
        <dbReference type="ChEBI" id="CHEBI:29033"/>
        <dbReference type="ChEBI" id="CHEBI:29034"/>
        <dbReference type="ChEBI" id="CHEBI:71002"/>
        <dbReference type="ChEBI" id="CHEBI:145795"/>
    </reaction>
    <physiologicalReaction direction="left-to-right" evidence="6">
        <dbReference type="Rhea" id="RHEA:62529"/>
    </physiologicalReaction>
</comment>
<comment type="catalytic activity">
    <reaction evidence="3 5">
        <text>digitoxin + 2 Fe(II)-[cytochrome c] + 3 H(+) = dihydrodigitoxin + 2 Fe(III)-[cytochrome c]</text>
        <dbReference type="Rhea" id="RHEA:62532"/>
        <dbReference type="Rhea" id="RHEA-COMP:10350"/>
        <dbReference type="Rhea" id="RHEA-COMP:14399"/>
        <dbReference type="ChEBI" id="CHEBI:15378"/>
        <dbReference type="ChEBI" id="CHEBI:29033"/>
        <dbReference type="ChEBI" id="CHEBI:29034"/>
        <dbReference type="ChEBI" id="CHEBI:145796"/>
        <dbReference type="ChEBI" id="CHEBI:282234"/>
    </reaction>
    <physiologicalReaction direction="left-to-right" evidence="6">
        <dbReference type="Rhea" id="RHEA:62533"/>
    </physiologicalReaction>
</comment>
<comment type="catalytic activity">
    <reaction evidence="3 5">
        <text>digoxigenin + 2 Fe(II)-[cytochrome c] + 3 H(+) = dihydrodigoxigenin + 2 Fe(III)-[cytochrome c]</text>
        <dbReference type="Rhea" id="RHEA:62536"/>
        <dbReference type="Rhea" id="RHEA-COMP:10350"/>
        <dbReference type="Rhea" id="RHEA-COMP:14399"/>
        <dbReference type="ChEBI" id="CHEBI:15378"/>
        <dbReference type="ChEBI" id="CHEBI:29033"/>
        <dbReference type="ChEBI" id="CHEBI:29034"/>
        <dbReference type="ChEBI" id="CHEBI:71004"/>
        <dbReference type="ChEBI" id="CHEBI:145797"/>
    </reaction>
    <physiologicalReaction direction="left-to-right" evidence="6">
        <dbReference type="Rhea" id="RHEA:62537"/>
    </physiologicalReaction>
</comment>
<comment type="catalytic activity">
    <reaction evidence="3 5">
        <text>ouabain + 2 Fe(II)-[cytochrome c] + 3 H(+) = dihydroouabain + 2 Fe(III)-[cytochrome c]</text>
        <dbReference type="Rhea" id="RHEA:62540"/>
        <dbReference type="Rhea" id="RHEA-COMP:10350"/>
        <dbReference type="Rhea" id="RHEA-COMP:14399"/>
        <dbReference type="ChEBI" id="CHEBI:15378"/>
        <dbReference type="ChEBI" id="CHEBI:29033"/>
        <dbReference type="ChEBI" id="CHEBI:29034"/>
        <dbReference type="ChEBI" id="CHEBI:131146"/>
        <dbReference type="ChEBI" id="CHEBI:145798"/>
    </reaction>
    <physiologicalReaction direction="left-to-right" evidence="6">
        <dbReference type="Rhea" id="RHEA:62541"/>
    </physiologicalReaction>
</comment>
<comment type="catalytic activity">
    <reaction evidence="3 5">
        <text>ouabagenin + 2 Fe(II)-[cytochrome c] + 3 H(+) = dihydroouabagenin + 2 Fe(III)-[cytochrome c]</text>
        <dbReference type="Rhea" id="RHEA:62544"/>
        <dbReference type="Rhea" id="RHEA-COMP:10350"/>
        <dbReference type="Rhea" id="RHEA-COMP:14399"/>
        <dbReference type="ChEBI" id="CHEBI:15378"/>
        <dbReference type="ChEBI" id="CHEBI:29033"/>
        <dbReference type="ChEBI" id="CHEBI:29034"/>
        <dbReference type="ChEBI" id="CHEBI:145789"/>
        <dbReference type="ChEBI" id="CHEBI:145799"/>
    </reaction>
    <physiologicalReaction direction="left-to-right" evidence="6">
        <dbReference type="Rhea" id="RHEA:62545"/>
    </physiologicalReaction>
</comment>
<comment type="cofactor">
    <cofactor evidence="3">
        <name>FAD</name>
        <dbReference type="ChEBI" id="CHEBI:57692"/>
    </cofactor>
</comment>
<comment type="cofactor">
    <cofactor evidence="3">
        <name>[4Fe-4S] cluster</name>
        <dbReference type="ChEBI" id="CHEBI:49883"/>
    </cofactor>
</comment>
<comment type="biophysicochemical properties">
    <kinetics>
        <KM evidence="3">94.6 uM for digoxin</KM>
        <text evidence="3">kcat is 0.23 sec(-1) for the reduction of digoxin.</text>
    </kinetics>
</comment>
<comment type="subunit">
    <text evidence="6">May form a membrane-associated complex with Cgr1.</text>
</comment>
<comment type="subcellular location">
    <subcellularLocation>
        <location>Cell membrane</location>
        <topology>Peripheral membrane protein</topology>
        <orientation evidence="6">Extracellular side</orientation>
    </subcellularLocation>
</comment>
<comment type="induction">
    <text evidence="2">Is highly up-regulated by digoxin and other cardiac glycosides containing unsaturated butyrolactone rings, such as digitoxin, digoxigenin, and, to a lesser extent, ouabain. Is repressed by arginine but not by ornithine. Part of an operon that consists of cgr1 and cgr2.</text>
</comment>
<comment type="PTM">
    <text evidence="1">Predicted to be exported by the Tat system. The position of the signal peptide cleavage has not been experimentally proven.</text>
</comment>
<comment type="miscellaneous">
    <text evidence="2 3">Digoxin is a toxic chemical produced by plants that, in low doses, can be used to treat heart failure and arrhythmia. cgr operon presence and abundance predicted the extent of drug inactivation by human gut microbial communities in ex vivo incubations, and is restricted to E.lenta species. Data about the gut microbes in nearly 1,900 people from three continents revealed that bacteria that can produce Cgr2 were present in the guts of more than 40% of the individuals, although often in low abundance.</text>
</comment>
<comment type="similarity">
    <text evidence="5">Belongs to the FAD-dependent oxidoreductase 2 family.</text>
</comment>
<evidence type="ECO:0000255" key="1">
    <source>
        <dbReference type="PROSITE-ProRule" id="PRU00648"/>
    </source>
</evidence>
<evidence type="ECO:0000269" key="2">
    <source>
    </source>
</evidence>
<evidence type="ECO:0000269" key="3">
    <source>
    </source>
</evidence>
<evidence type="ECO:0000303" key="4">
    <source>
    </source>
</evidence>
<evidence type="ECO:0000305" key="5"/>
<evidence type="ECO:0000305" key="6">
    <source>
    </source>
</evidence>
<evidence type="ECO:0000312" key="7">
    <source>
        <dbReference type="EMBL" id="ACV56484.1"/>
    </source>
</evidence>
<feature type="signal peptide" description="Tat-type signal" evidence="1">
    <location>
        <begin position="1"/>
        <end position="48"/>
    </location>
</feature>
<feature type="chain" id="PRO_5002992288" description="Digoxin reductase">
    <location>
        <begin position="49"/>
        <end position="560"/>
    </location>
</feature>
<feature type="mutagenesis site" description="Decrease in catalytic activity. Still binds a [4Fe-4S] cluster." evidence="3">
    <original>C</original>
    <variation>A</variation>
    <location>
        <position position="82"/>
    </location>
</feature>
<feature type="mutagenesis site" description="Decrease in catalytic activity. Still binds a [4Fe-4S] cluster." evidence="3">
    <original>C</original>
    <variation>A</variation>
    <location>
        <position position="158"/>
    </location>
</feature>
<feature type="mutagenesis site" description="Decrease in catalytic activity. Still binds a [4Fe-4S] cluster." evidence="3">
    <original>C</original>
    <variation>A</variation>
    <location>
        <position position="187"/>
    </location>
</feature>
<feature type="mutagenesis site" description="Decrease in catalytic activity. Still binds a [4Fe-4S] cluster." evidence="3">
    <original>C</original>
    <variation>A</variation>
    <location>
        <position position="265"/>
    </location>
</feature>
<feature type="mutagenesis site" description="Decrease in catalytic activity. Still binds a [4Fe-4S] cluster." evidence="3">
    <original>C</original>
    <variation>A</variation>
    <location>
        <position position="327"/>
    </location>
</feature>
<feature type="mutagenesis site" description="No effect on catalytic activity." evidence="3">
    <original>Y</original>
    <variation>F</variation>
    <location>
        <position position="532"/>
    </location>
</feature>
<feature type="mutagenesis site" description="Decrease in catalytic activity. Still binds a [4Fe-4S] cluster." evidence="3">
    <original>C</original>
    <variation>A</variation>
    <location>
        <position position="535"/>
    </location>
</feature>
<feature type="mutagenesis site" description="Decrease in catalytic activity." evidence="3">
    <original>G</original>
    <variation>A</variation>
    <location>
        <position position="536"/>
    </location>
</feature>
<proteinExistence type="evidence at protein level"/>
<sequence>MEYGKCRGIERGMGRRDFLKAATLLGATAAGAGMLAGCAPKSASEAQAQTAPAATGGLDPADVDWKYETDVVIVGSGSGGTCAAIEAAEAGADVVVFEKDKAMYGGNSALCGGYMLAAGWSTQEEITGYAGDTGEAFANQMLRWSQGLGNQDMIREACLRSGEAVDWMMDTGRTYEGASPLPPVWSCGDTEADVVPRSVYNHNAYGATEGHMATLKKRAESLSNIEIEMGCEVAHILKNAEGSVIGVQLADGSFAKARKGVVMACASVDNNLEMSKDLGLMQNVWGLTLEGAGLLAPGNPDMDSNTGDGVRMLREIGAELCMQQAVCMNDSIYVGGISDWGMSEILGKDVNIHDSSNIDAILVDKTGRRFCQDDAEWGYVMHECAQAAWKQGFTPDDPTTGYIFYVYDATGAPFFEMKGHTPDTCDTTFSADSVDGLAEFIGCDPTALASEVERWNSFCEAGLDADFGRRANMAPIATPPFYCDVVRPGPMGTFAGAKSNVEAEIIGLDGNPIPRLYGAGCIIGGNVSGAFYFGCGWSITNTVVWGREAGRNVAALEPWE</sequence>
<name>CGR2_EGGLE</name>